<keyword id="KW-0479">Metal-binding</keyword>
<keyword id="KW-0539">Nucleus</keyword>
<keyword id="KW-1185">Reference proteome</keyword>
<keyword id="KW-0677">Repeat</keyword>
<keyword id="KW-0804">Transcription</keyword>
<keyword id="KW-0805">Transcription regulation</keyword>
<keyword id="KW-0862">Zinc</keyword>
<keyword id="KW-0863">Zinc-finger</keyword>
<comment type="function">
    <text evidence="1">May be involved in transcriptional regulation.</text>
</comment>
<comment type="subcellular location">
    <subcellularLocation>
        <location evidence="3">Nucleus</location>
    </subcellularLocation>
</comment>
<name>ZSA5C_HUMAN</name>
<accession>A6NGD5</accession>
<sequence>MAANCTSSWSLGESCNSPGSEPPQSMPSPATQLGNHDSDPETCHVNFRMFSCPKESDPIQALRKLTELCHLWLRPDLHTKEQILDMLVMEQFMISMPQELQVLVMMNGVQSCKDLEDLLRNNRRPKKWSVVSFLGKEYLMQESDVEMAEAPASVRDDPRHVSSQRTSSVNQMCPEEGQASQELQTLPRVPALFRRQEEDFLLPETTVMKGDPKALRPKPTLEKDLEEDREENPGLTSPEPQLPNSPTGVVGAKEGKEPQKRASVENVDADTPSACVVEREASTHSGSRGDALNLRGLKRSKPDATSISQEEPQGEATPVGNRESPGQAEINPVHSPGPAGPVSHPSGQEVKELLPFACEVCGKRFKYRGKLAVHTRSHTGERLFQCNLCGKRFMQRIGLQFHQRTHTGERPYTCDICQKQFTQKSYLKCHKRSHTGEKPFECKDCKKVFTYKANLKEHQRIHSGEKPHKCSKCPRAFGRPATLRRHQKTHREATSQ</sequence>
<feature type="chain" id="PRO_0000332170" description="Zinc finger and SCAN domain-containing protein 5C">
    <location>
        <begin position="1"/>
        <end position="496"/>
    </location>
</feature>
<feature type="domain" description="SCAN box" evidence="3">
    <location>
        <begin position="44"/>
        <end position="126"/>
    </location>
</feature>
<feature type="zinc finger region" description="C2H2-type 1" evidence="2">
    <location>
        <begin position="356"/>
        <end position="378"/>
    </location>
</feature>
<feature type="zinc finger region" description="C2H2-type 2" evidence="2">
    <location>
        <begin position="384"/>
        <end position="406"/>
    </location>
</feature>
<feature type="zinc finger region" description="C2H2-type 3" evidence="2">
    <location>
        <begin position="412"/>
        <end position="434"/>
    </location>
</feature>
<feature type="zinc finger region" description="C2H2-type 4" evidence="2">
    <location>
        <begin position="440"/>
        <end position="462"/>
    </location>
</feature>
<feature type="zinc finger region" description="C2H2-type 5" evidence="2">
    <location>
        <begin position="468"/>
        <end position="490"/>
    </location>
</feature>
<feature type="region of interest" description="Disordered" evidence="4">
    <location>
        <begin position="1"/>
        <end position="38"/>
    </location>
</feature>
<feature type="region of interest" description="Disordered" evidence="4">
    <location>
        <begin position="149"/>
        <end position="188"/>
    </location>
</feature>
<feature type="region of interest" description="Disordered" evidence="4">
    <location>
        <begin position="203"/>
        <end position="347"/>
    </location>
</feature>
<feature type="compositionally biased region" description="Polar residues" evidence="4">
    <location>
        <begin position="1"/>
        <end position="19"/>
    </location>
</feature>
<feature type="compositionally biased region" description="Polar residues" evidence="4">
    <location>
        <begin position="161"/>
        <end position="171"/>
    </location>
</feature>
<feature type="compositionally biased region" description="Basic and acidic residues" evidence="4">
    <location>
        <begin position="210"/>
        <end position="223"/>
    </location>
</feature>
<feature type="compositionally biased region" description="Polar residues" evidence="4">
    <location>
        <begin position="234"/>
        <end position="247"/>
    </location>
</feature>
<feature type="compositionally biased region" description="Basic and acidic residues" evidence="4">
    <location>
        <begin position="253"/>
        <end position="263"/>
    </location>
</feature>
<feature type="sequence variant" id="VAR_052927" description="In dbSNP:rs10419548.">
    <original>Q</original>
    <variation>R</variation>
    <location>
        <position position="24"/>
    </location>
</feature>
<feature type="sequence variant" id="VAR_042970" description="In dbSNP:rs4801690.">
    <original>Q</original>
    <variation>R</variation>
    <location>
        <position position="181"/>
    </location>
</feature>
<feature type="sequence variant" id="VAR_042971" description="In dbSNP:rs12979551.">
    <original>E</original>
    <variation>D</variation>
    <location>
        <position position="197"/>
    </location>
</feature>
<feature type="sequence variant" id="VAR_052928" description="In dbSNP:rs1865102.">
    <original>Q</original>
    <variation>K</variation>
    <location>
        <position position="259"/>
    </location>
</feature>
<gene>
    <name evidence="6" type="primary">ZSCAN5C</name>
    <name evidence="6" type="synonym">ZSCAN5CP</name>
</gene>
<reference key="1">
    <citation type="journal article" date="2004" name="Nature">
        <title>The DNA sequence and biology of human chromosome 19.</title>
        <authorList>
            <person name="Grimwood J."/>
            <person name="Gordon L.A."/>
            <person name="Olsen A.S."/>
            <person name="Terry A."/>
            <person name="Schmutz J."/>
            <person name="Lamerdin J.E."/>
            <person name="Hellsten U."/>
            <person name="Goodstein D."/>
            <person name="Couronne O."/>
            <person name="Tran-Gyamfi M."/>
            <person name="Aerts A."/>
            <person name="Altherr M."/>
            <person name="Ashworth L."/>
            <person name="Bajorek E."/>
            <person name="Black S."/>
            <person name="Branscomb E."/>
            <person name="Caenepeel S."/>
            <person name="Carrano A.V."/>
            <person name="Caoile C."/>
            <person name="Chan Y.M."/>
            <person name="Christensen M."/>
            <person name="Cleland C.A."/>
            <person name="Copeland A."/>
            <person name="Dalin E."/>
            <person name="Dehal P."/>
            <person name="Denys M."/>
            <person name="Detter J.C."/>
            <person name="Escobar J."/>
            <person name="Flowers D."/>
            <person name="Fotopulos D."/>
            <person name="Garcia C."/>
            <person name="Georgescu A.M."/>
            <person name="Glavina T."/>
            <person name="Gomez M."/>
            <person name="Gonzales E."/>
            <person name="Groza M."/>
            <person name="Hammon N."/>
            <person name="Hawkins T."/>
            <person name="Haydu L."/>
            <person name="Ho I."/>
            <person name="Huang W."/>
            <person name="Israni S."/>
            <person name="Jett J."/>
            <person name="Kadner K."/>
            <person name="Kimball H."/>
            <person name="Kobayashi A."/>
            <person name="Larionov V."/>
            <person name="Leem S.-H."/>
            <person name="Lopez F."/>
            <person name="Lou Y."/>
            <person name="Lowry S."/>
            <person name="Malfatti S."/>
            <person name="Martinez D."/>
            <person name="McCready P.M."/>
            <person name="Medina C."/>
            <person name="Morgan J."/>
            <person name="Nelson K."/>
            <person name="Nolan M."/>
            <person name="Ovcharenko I."/>
            <person name="Pitluck S."/>
            <person name="Pollard M."/>
            <person name="Popkie A.P."/>
            <person name="Predki P."/>
            <person name="Quan G."/>
            <person name="Ramirez L."/>
            <person name="Rash S."/>
            <person name="Retterer J."/>
            <person name="Rodriguez A."/>
            <person name="Rogers S."/>
            <person name="Salamov A."/>
            <person name="Salazar A."/>
            <person name="She X."/>
            <person name="Smith D."/>
            <person name="Slezak T."/>
            <person name="Solovyev V."/>
            <person name="Thayer N."/>
            <person name="Tice H."/>
            <person name="Tsai M."/>
            <person name="Ustaszewska A."/>
            <person name="Vo N."/>
            <person name="Wagner M."/>
            <person name="Wheeler J."/>
            <person name="Wu K."/>
            <person name="Xie G."/>
            <person name="Yang J."/>
            <person name="Dubchak I."/>
            <person name="Furey T.S."/>
            <person name="DeJong P."/>
            <person name="Dickson M."/>
            <person name="Gordon D."/>
            <person name="Eichler E.E."/>
            <person name="Pennacchio L.A."/>
            <person name="Richardson P."/>
            <person name="Stubbs L."/>
            <person name="Rokhsar D.S."/>
            <person name="Myers R.M."/>
            <person name="Rubin E.M."/>
            <person name="Lucas S.M."/>
        </authorList>
    </citation>
    <scope>NUCLEOTIDE SEQUENCE [LARGE SCALE GENOMIC DNA]</scope>
</reference>
<dbReference type="EMBL" id="AC011506">
    <property type="status" value="NOT_ANNOTATED_CDS"/>
    <property type="molecule type" value="Genomic_DNA"/>
</dbReference>
<dbReference type="CCDS" id="CCDS86811.1"/>
<dbReference type="RefSeq" id="NP_001345342.1">
    <property type="nucleotide sequence ID" value="NM_001358413.3"/>
</dbReference>
<dbReference type="SMR" id="A6NGD5"/>
<dbReference type="iPTMnet" id="A6NGD5"/>
<dbReference type="PhosphoSitePlus" id="A6NGD5"/>
<dbReference type="BioMuta" id="ZSCAN5C"/>
<dbReference type="jPOST" id="A6NGD5"/>
<dbReference type="MassIVE" id="A6NGD5"/>
<dbReference type="PaxDb" id="9606-ENSP00000435234"/>
<dbReference type="PeptideAtlas" id="A6NGD5"/>
<dbReference type="ProteomicsDB" id="1118"/>
<dbReference type="Pumba" id="A6NGD5"/>
<dbReference type="ABCD" id="A6NGD5">
    <property type="antibodies" value="4 sequenced antibodies"/>
</dbReference>
<dbReference type="Antibodypedia" id="33189">
    <property type="antibodies" value="26 antibodies from 10 providers"/>
</dbReference>
<dbReference type="Ensembl" id="ENST00000534327.7">
    <property type="protein sequence ID" value="ENSP00000435234.1"/>
    <property type="gene ID" value="ENSG00000204532.9"/>
</dbReference>
<dbReference type="GeneID" id="649137"/>
<dbReference type="MANE-Select" id="ENST00000534327.7">
    <property type="protein sequence ID" value="ENSP00000435234.1"/>
    <property type="RefSeq nucleotide sequence ID" value="NM_001358413.3"/>
    <property type="RefSeq protein sequence ID" value="NP_001345342.1"/>
</dbReference>
<dbReference type="UCSC" id="uc061dec.1">
    <property type="organism name" value="human"/>
</dbReference>
<dbReference type="AGR" id="HGNC:34294"/>
<dbReference type="GeneCards" id="ZSCAN5C"/>
<dbReference type="HGNC" id="HGNC:34294">
    <property type="gene designation" value="ZSCAN5C"/>
</dbReference>
<dbReference type="HPA" id="ENSG00000204532">
    <property type="expression patterns" value="Not detected"/>
</dbReference>
<dbReference type="neXtProt" id="NX_A6NGD5"/>
<dbReference type="OpenTargets" id="ENSG00000204532"/>
<dbReference type="PharmGKB" id="PA162411044"/>
<dbReference type="VEuPathDB" id="HostDB:ENSG00000204532"/>
<dbReference type="eggNOG" id="KOG1721">
    <property type="taxonomic scope" value="Eukaryota"/>
</dbReference>
<dbReference type="GeneTree" id="ENSGT00940000163230"/>
<dbReference type="HOGENOM" id="CLU_002678_49_11_1"/>
<dbReference type="InParanoid" id="A6NGD5"/>
<dbReference type="OMA" id="IGLQFHQ"/>
<dbReference type="OrthoDB" id="3437960at2759"/>
<dbReference type="PAN-GO" id="A6NGD5">
    <property type="GO annotations" value="3 GO annotations based on evolutionary models"/>
</dbReference>
<dbReference type="PhylomeDB" id="A6NGD5"/>
<dbReference type="TreeFam" id="TF341155"/>
<dbReference type="PathwayCommons" id="A6NGD5"/>
<dbReference type="Pharos" id="A6NGD5">
    <property type="development level" value="Tdark"/>
</dbReference>
<dbReference type="PRO" id="PR:A6NGD5"/>
<dbReference type="Proteomes" id="UP000005640">
    <property type="component" value="Chromosome 19"/>
</dbReference>
<dbReference type="RNAct" id="A6NGD5">
    <property type="molecule type" value="protein"/>
</dbReference>
<dbReference type="Bgee" id="ENSG00000204532">
    <property type="expression patterns" value="Expressed in male germ line stem cell (sensu Vertebrata) in testis and 2 other cell types or tissues"/>
</dbReference>
<dbReference type="GO" id="GO:0005634">
    <property type="term" value="C:nucleus"/>
    <property type="evidence" value="ECO:0007669"/>
    <property type="project" value="UniProtKB-SubCell"/>
</dbReference>
<dbReference type="GO" id="GO:0000981">
    <property type="term" value="F:DNA-binding transcription factor activity, RNA polymerase II-specific"/>
    <property type="evidence" value="ECO:0000318"/>
    <property type="project" value="GO_Central"/>
</dbReference>
<dbReference type="GO" id="GO:0000978">
    <property type="term" value="F:RNA polymerase II cis-regulatory region sequence-specific DNA binding"/>
    <property type="evidence" value="ECO:0000318"/>
    <property type="project" value="GO_Central"/>
</dbReference>
<dbReference type="GO" id="GO:0008270">
    <property type="term" value="F:zinc ion binding"/>
    <property type="evidence" value="ECO:0007669"/>
    <property type="project" value="UniProtKB-KW"/>
</dbReference>
<dbReference type="GO" id="GO:0006357">
    <property type="term" value="P:regulation of transcription by RNA polymerase II"/>
    <property type="evidence" value="ECO:0000318"/>
    <property type="project" value="GO_Central"/>
</dbReference>
<dbReference type="CDD" id="cd07936">
    <property type="entry name" value="SCAN"/>
    <property type="match status" value="1"/>
</dbReference>
<dbReference type="FunFam" id="3.30.160.60:FF:001690">
    <property type="entry name" value="Zinc finger and SCAN domain containing 5A"/>
    <property type="match status" value="1"/>
</dbReference>
<dbReference type="FunFam" id="3.30.160.60:FF:001718">
    <property type="entry name" value="Zinc finger and SCAN domain containing 5A"/>
    <property type="match status" value="1"/>
</dbReference>
<dbReference type="FunFam" id="3.30.160.60:FF:000690">
    <property type="entry name" value="Zinc finger protein 354C"/>
    <property type="match status" value="1"/>
</dbReference>
<dbReference type="FunFam" id="3.30.160.60:FF:001949">
    <property type="entry name" value="zinc finger protein 62 homolog isoform X2"/>
    <property type="match status" value="1"/>
</dbReference>
<dbReference type="FunFam" id="3.30.160.60:FF:000290">
    <property type="entry name" value="Zinc finger protein 697 isoform X1"/>
    <property type="match status" value="1"/>
</dbReference>
<dbReference type="Gene3D" id="3.30.160.60">
    <property type="entry name" value="Classic Zinc Finger"/>
    <property type="match status" value="5"/>
</dbReference>
<dbReference type="Gene3D" id="1.10.4020.10">
    <property type="entry name" value="DNA breaking-rejoining enzymes"/>
    <property type="match status" value="1"/>
</dbReference>
<dbReference type="InterPro" id="IPR003309">
    <property type="entry name" value="SCAN_dom"/>
</dbReference>
<dbReference type="InterPro" id="IPR038269">
    <property type="entry name" value="SCAN_sf"/>
</dbReference>
<dbReference type="InterPro" id="IPR050331">
    <property type="entry name" value="Zinc_finger"/>
</dbReference>
<dbReference type="InterPro" id="IPR036236">
    <property type="entry name" value="Znf_C2H2_sf"/>
</dbReference>
<dbReference type="InterPro" id="IPR013087">
    <property type="entry name" value="Znf_C2H2_type"/>
</dbReference>
<dbReference type="PANTHER" id="PTHR16515:SF49">
    <property type="entry name" value="GASTRULA ZINC FINGER PROTEIN XLCGF49.1-LIKE-RELATED"/>
    <property type="match status" value="1"/>
</dbReference>
<dbReference type="PANTHER" id="PTHR16515">
    <property type="entry name" value="PR DOMAIN ZINC FINGER PROTEIN"/>
    <property type="match status" value="1"/>
</dbReference>
<dbReference type="Pfam" id="PF02023">
    <property type="entry name" value="SCAN"/>
    <property type="match status" value="1"/>
</dbReference>
<dbReference type="Pfam" id="PF00096">
    <property type="entry name" value="zf-C2H2"/>
    <property type="match status" value="4"/>
</dbReference>
<dbReference type="Pfam" id="PF12874">
    <property type="entry name" value="zf-met"/>
    <property type="match status" value="1"/>
</dbReference>
<dbReference type="SMART" id="SM00431">
    <property type="entry name" value="SCAN"/>
    <property type="match status" value="1"/>
</dbReference>
<dbReference type="SMART" id="SM00355">
    <property type="entry name" value="ZnF_C2H2"/>
    <property type="match status" value="5"/>
</dbReference>
<dbReference type="SUPFAM" id="SSF57667">
    <property type="entry name" value="beta-beta-alpha zinc fingers"/>
    <property type="match status" value="3"/>
</dbReference>
<dbReference type="SUPFAM" id="SSF47353">
    <property type="entry name" value="Retrovirus capsid dimerization domain-like"/>
    <property type="match status" value="1"/>
</dbReference>
<dbReference type="PROSITE" id="PS50804">
    <property type="entry name" value="SCAN_BOX"/>
    <property type="match status" value="1"/>
</dbReference>
<dbReference type="PROSITE" id="PS00028">
    <property type="entry name" value="ZINC_FINGER_C2H2_1"/>
    <property type="match status" value="5"/>
</dbReference>
<dbReference type="PROSITE" id="PS50157">
    <property type="entry name" value="ZINC_FINGER_C2H2_2"/>
    <property type="match status" value="5"/>
</dbReference>
<proteinExistence type="inferred from homology"/>
<evidence type="ECO:0000250" key="1"/>
<evidence type="ECO:0000255" key="2">
    <source>
        <dbReference type="PROSITE-ProRule" id="PRU00042"/>
    </source>
</evidence>
<evidence type="ECO:0000255" key="3">
    <source>
        <dbReference type="PROSITE-ProRule" id="PRU00187"/>
    </source>
</evidence>
<evidence type="ECO:0000256" key="4">
    <source>
        <dbReference type="SAM" id="MobiDB-lite"/>
    </source>
</evidence>
<evidence type="ECO:0000305" key="5"/>
<evidence type="ECO:0000312" key="6">
    <source>
        <dbReference type="HGNC" id="HGNC:34294"/>
    </source>
</evidence>
<organism>
    <name type="scientific">Homo sapiens</name>
    <name type="common">Human</name>
    <dbReference type="NCBI Taxonomy" id="9606"/>
    <lineage>
        <taxon>Eukaryota</taxon>
        <taxon>Metazoa</taxon>
        <taxon>Chordata</taxon>
        <taxon>Craniata</taxon>
        <taxon>Vertebrata</taxon>
        <taxon>Euteleostomi</taxon>
        <taxon>Mammalia</taxon>
        <taxon>Eutheria</taxon>
        <taxon>Euarchontoglires</taxon>
        <taxon>Primates</taxon>
        <taxon>Haplorrhini</taxon>
        <taxon>Catarrhini</taxon>
        <taxon>Hominidae</taxon>
        <taxon>Homo</taxon>
    </lineage>
</organism>
<protein>
    <recommendedName>
        <fullName evidence="5">Zinc finger and SCAN domain-containing protein 5C</fullName>
    </recommendedName>
    <alternativeName>
        <fullName evidence="6">Zinc finger and SCAN domain-containing protein 5C pseudogene</fullName>
    </alternativeName>
</protein>